<organism>
    <name type="scientific">Sulfurisphaera tokodaii (strain DSM 16993 / JCM 10545 / NBRC 100140 / 7)</name>
    <name type="common">Sulfolobus tokodaii</name>
    <dbReference type="NCBI Taxonomy" id="273063"/>
    <lineage>
        <taxon>Archaea</taxon>
        <taxon>Thermoproteota</taxon>
        <taxon>Thermoprotei</taxon>
        <taxon>Sulfolobales</taxon>
        <taxon>Sulfolobaceae</taxon>
        <taxon>Sulfurisphaera</taxon>
    </lineage>
</organism>
<name>NADK_SULTO</name>
<accession>Q96YN6</accession>
<evidence type="ECO:0000255" key="1">
    <source>
        <dbReference type="HAMAP-Rule" id="MF_00361"/>
    </source>
</evidence>
<reference key="1">
    <citation type="journal article" date="2001" name="DNA Res.">
        <title>Complete genome sequence of an aerobic thermoacidophilic Crenarchaeon, Sulfolobus tokodaii strain7.</title>
        <authorList>
            <person name="Kawarabayasi Y."/>
            <person name="Hino Y."/>
            <person name="Horikawa H."/>
            <person name="Jin-no K."/>
            <person name="Takahashi M."/>
            <person name="Sekine M."/>
            <person name="Baba S."/>
            <person name="Ankai A."/>
            <person name="Kosugi H."/>
            <person name="Hosoyama A."/>
            <person name="Fukui S."/>
            <person name="Nagai Y."/>
            <person name="Nishijima K."/>
            <person name="Otsuka R."/>
            <person name="Nakazawa H."/>
            <person name="Takamiya M."/>
            <person name="Kato Y."/>
            <person name="Yoshizawa T."/>
            <person name="Tanaka T."/>
            <person name="Kudoh Y."/>
            <person name="Yamazaki J."/>
            <person name="Kushida N."/>
            <person name="Oguchi A."/>
            <person name="Aoki K."/>
            <person name="Masuda S."/>
            <person name="Yanagii M."/>
            <person name="Nishimura M."/>
            <person name="Yamagishi A."/>
            <person name="Oshima T."/>
            <person name="Kikuchi H."/>
        </authorList>
    </citation>
    <scope>NUCLEOTIDE SEQUENCE [LARGE SCALE GENOMIC DNA]</scope>
    <source>
        <strain>DSM 16993 / JCM 10545 / NBRC 100140 / 7</strain>
    </source>
</reference>
<comment type="function">
    <text evidence="1">Involved in the regulation of the intracellular balance of NAD and NADP, and is a key enzyme in the biosynthesis of NADP. Catalyzes specifically the phosphorylation on 2'-hydroxyl of the adenosine moiety of NAD to yield NADP.</text>
</comment>
<comment type="catalytic activity">
    <reaction evidence="1">
        <text>NAD(+) + ATP = ADP + NADP(+) + H(+)</text>
        <dbReference type="Rhea" id="RHEA:18629"/>
        <dbReference type="ChEBI" id="CHEBI:15378"/>
        <dbReference type="ChEBI" id="CHEBI:30616"/>
        <dbReference type="ChEBI" id="CHEBI:57540"/>
        <dbReference type="ChEBI" id="CHEBI:58349"/>
        <dbReference type="ChEBI" id="CHEBI:456216"/>
        <dbReference type="EC" id="2.7.1.23"/>
    </reaction>
</comment>
<comment type="cofactor">
    <cofactor evidence="1">
        <name>a divalent metal cation</name>
        <dbReference type="ChEBI" id="CHEBI:60240"/>
    </cofactor>
</comment>
<comment type="subcellular location">
    <subcellularLocation>
        <location evidence="1">Cytoplasm</location>
    </subcellularLocation>
</comment>
<comment type="similarity">
    <text evidence="1">Belongs to the NAD kinase family.</text>
</comment>
<dbReference type="EC" id="2.7.1.23" evidence="1"/>
<dbReference type="EMBL" id="BA000023">
    <property type="protein sequence ID" value="BAB67241.1"/>
    <property type="molecule type" value="Genomic_DNA"/>
</dbReference>
<dbReference type="RefSeq" id="WP_010980216.1">
    <property type="nucleotide sequence ID" value="NC_003106.2"/>
</dbReference>
<dbReference type="SMR" id="Q96YN6"/>
<dbReference type="STRING" id="273063.STK_21360"/>
<dbReference type="KEGG" id="sto:STK_21360"/>
<dbReference type="PATRIC" id="fig|273063.9.peg.2427"/>
<dbReference type="eggNOG" id="arCOG01348">
    <property type="taxonomic scope" value="Archaea"/>
</dbReference>
<dbReference type="OrthoDB" id="77798at2157"/>
<dbReference type="Proteomes" id="UP000001015">
    <property type="component" value="Chromosome"/>
</dbReference>
<dbReference type="GO" id="GO:0005737">
    <property type="term" value="C:cytoplasm"/>
    <property type="evidence" value="ECO:0007669"/>
    <property type="project" value="UniProtKB-SubCell"/>
</dbReference>
<dbReference type="GO" id="GO:0005524">
    <property type="term" value="F:ATP binding"/>
    <property type="evidence" value="ECO:0007669"/>
    <property type="project" value="UniProtKB-KW"/>
</dbReference>
<dbReference type="GO" id="GO:0046872">
    <property type="term" value="F:metal ion binding"/>
    <property type="evidence" value="ECO:0007669"/>
    <property type="project" value="UniProtKB-UniRule"/>
</dbReference>
<dbReference type="GO" id="GO:0003951">
    <property type="term" value="F:NAD+ kinase activity"/>
    <property type="evidence" value="ECO:0007669"/>
    <property type="project" value="UniProtKB-UniRule"/>
</dbReference>
<dbReference type="GO" id="GO:0019674">
    <property type="term" value="P:NAD metabolic process"/>
    <property type="evidence" value="ECO:0007669"/>
    <property type="project" value="InterPro"/>
</dbReference>
<dbReference type="GO" id="GO:0006741">
    <property type="term" value="P:NADP biosynthetic process"/>
    <property type="evidence" value="ECO:0007669"/>
    <property type="project" value="UniProtKB-UniRule"/>
</dbReference>
<dbReference type="Gene3D" id="3.40.50.10330">
    <property type="entry name" value="Probable inorganic polyphosphate/atp-NAD kinase, domain 1"/>
    <property type="match status" value="1"/>
</dbReference>
<dbReference type="Gene3D" id="2.60.200.30">
    <property type="entry name" value="Probable inorganic polyphosphate/atp-NAD kinase, domain 2"/>
    <property type="match status" value="1"/>
</dbReference>
<dbReference type="HAMAP" id="MF_00361">
    <property type="entry name" value="NAD_kinase"/>
    <property type="match status" value="1"/>
</dbReference>
<dbReference type="InterPro" id="IPR017438">
    <property type="entry name" value="ATP-NAD_kinase_N"/>
</dbReference>
<dbReference type="InterPro" id="IPR017437">
    <property type="entry name" value="ATP-NAD_kinase_PpnK-typ_C"/>
</dbReference>
<dbReference type="InterPro" id="IPR016064">
    <property type="entry name" value="NAD/diacylglycerol_kinase_sf"/>
</dbReference>
<dbReference type="InterPro" id="IPR002504">
    <property type="entry name" value="NADK"/>
</dbReference>
<dbReference type="PANTHER" id="PTHR20275:SF43">
    <property type="entry name" value="BIFUNCTIONAL NADP PHOSPHATASE_NAD KINASE"/>
    <property type="match status" value="1"/>
</dbReference>
<dbReference type="PANTHER" id="PTHR20275">
    <property type="entry name" value="NAD KINASE"/>
    <property type="match status" value="1"/>
</dbReference>
<dbReference type="Pfam" id="PF01513">
    <property type="entry name" value="NAD_kinase"/>
    <property type="match status" value="1"/>
</dbReference>
<dbReference type="Pfam" id="PF20143">
    <property type="entry name" value="NAD_kinase_C"/>
    <property type="match status" value="1"/>
</dbReference>
<dbReference type="SUPFAM" id="SSF111331">
    <property type="entry name" value="NAD kinase/diacylglycerol kinase-like"/>
    <property type="match status" value="1"/>
</dbReference>
<protein>
    <recommendedName>
        <fullName evidence="1">NAD kinase</fullName>
        <ecNumber evidence="1">2.7.1.23</ecNumber>
    </recommendedName>
    <alternativeName>
        <fullName evidence="1">ATP-dependent NAD kinase</fullName>
    </alternativeName>
</protein>
<proteinExistence type="inferred from homology"/>
<keyword id="KW-0067">ATP-binding</keyword>
<keyword id="KW-0963">Cytoplasm</keyword>
<keyword id="KW-0418">Kinase</keyword>
<keyword id="KW-0520">NAD</keyword>
<keyword id="KW-0521">NADP</keyword>
<keyword id="KW-0547">Nucleotide-binding</keyword>
<keyword id="KW-1185">Reference proteome</keyword>
<keyword id="KW-0808">Transferase</keyword>
<sequence>MKLKIFTKNSPDAIEFSKYVKNLAENLGFKITENDPDVVLVIGGDGTLLRAVKDGIPILGVKFGRRSALLDIRPENIKEALELLQKNKYTIEEYPMLEAKSKNINTIAFNEIAILFNNPETVYGSVNIKERKILFEGDGVLIATPQGSWAWSYSATRVLLHKDINGIEITFINPIIPNIKALIIPQTETILVKLEDKGRTQNVRVISDGEIVGNLISKEDEELTITLSKRKAKILRFFNLIEFDGLFT</sequence>
<feature type="chain" id="PRO_0000120710" description="NAD kinase">
    <location>
        <begin position="1"/>
        <end position="248"/>
    </location>
</feature>
<feature type="active site" description="Proton acceptor" evidence="1">
    <location>
        <position position="45"/>
    </location>
</feature>
<feature type="binding site" evidence="1">
    <location>
        <begin position="45"/>
        <end position="46"/>
    </location>
    <ligand>
        <name>NAD(+)</name>
        <dbReference type="ChEBI" id="CHEBI:57540"/>
    </ligand>
</feature>
<feature type="binding site" evidence="1">
    <location>
        <position position="50"/>
    </location>
    <ligand>
        <name>NAD(+)</name>
        <dbReference type="ChEBI" id="CHEBI:57540"/>
    </ligand>
</feature>
<feature type="binding site" evidence="1">
    <location>
        <begin position="110"/>
        <end position="111"/>
    </location>
    <ligand>
        <name>NAD(+)</name>
        <dbReference type="ChEBI" id="CHEBI:57540"/>
    </ligand>
</feature>
<feature type="binding site" evidence="1">
    <location>
        <position position="138"/>
    </location>
    <ligand>
        <name>NAD(+)</name>
        <dbReference type="ChEBI" id="CHEBI:57540"/>
    </ligand>
</feature>
<gene>
    <name evidence="1" type="primary">nadK</name>
    <name type="ordered locus">STK_21360</name>
</gene>